<feature type="chain" id="PRO_0000232243" description="ATP-dependent RNA helicase DRS1">
    <location>
        <begin position="1"/>
        <end position="725"/>
    </location>
</feature>
<feature type="domain" description="Helicase ATP-binding" evidence="3">
    <location>
        <begin position="237"/>
        <end position="412"/>
    </location>
</feature>
<feature type="domain" description="Helicase C-terminal" evidence="4">
    <location>
        <begin position="423"/>
        <end position="613"/>
    </location>
</feature>
<feature type="region of interest" description="Disordered" evidence="5">
    <location>
        <begin position="14"/>
        <end position="184"/>
    </location>
</feature>
<feature type="region of interest" description="Disordered" evidence="5">
    <location>
        <begin position="646"/>
        <end position="725"/>
    </location>
</feature>
<feature type="coiled-coil region" evidence="2">
    <location>
        <begin position="607"/>
        <end position="686"/>
    </location>
</feature>
<feature type="short sequence motif" description="Q motif">
    <location>
        <begin position="206"/>
        <end position="234"/>
    </location>
</feature>
<feature type="short sequence motif" description="DEAD box">
    <location>
        <begin position="360"/>
        <end position="363"/>
    </location>
</feature>
<feature type="compositionally biased region" description="Acidic residues" evidence="5">
    <location>
        <begin position="21"/>
        <end position="33"/>
    </location>
</feature>
<feature type="compositionally biased region" description="Basic and acidic residues" evidence="5">
    <location>
        <begin position="85"/>
        <end position="95"/>
    </location>
</feature>
<feature type="compositionally biased region" description="Basic and acidic residues" evidence="5">
    <location>
        <begin position="107"/>
        <end position="116"/>
    </location>
</feature>
<feature type="compositionally biased region" description="Acidic residues" evidence="5">
    <location>
        <begin position="117"/>
        <end position="127"/>
    </location>
</feature>
<feature type="compositionally biased region" description="Acidic residues" evidence="5">
    <location>
        <begin position="139"/>
        <end position="184"/>
    </location>
</feature>
<feature type="compositionally biased region" description="Basic and acidic residues" evidence="5">
    <location>
        <begin position="669"/>
        <end position="707"/>
    </location>
</feature>
<feature type="compositionally biased region" description="Basic residues" evidence="5">
    <location>
        <begin position="708"/>
        <end position="725"/>
    </location>
</feature>
<feature type="binding site" evidence="3">
    <location>
        <begin position="250"/>
        <end position="257"/>
    </location>
    <ligand>
        <name>ATP</name>
        <dbReference type="ChEBI" id="CHEBI:30616"/>
    </ligand>
</feature>
<organism>
    <name type="scientific">Candida glabrata (strain ATCC 2001 / BCRC 20586 / JCM 3761 / NBRC 0622 / NRRL Y-65 / CBS 138)</name>
    <name type="common">Yeast</name>
    <name type="synonym">Nakaseomyces glabratus</name>
    <dbReference type="NCBI Taxonomy" id="284593"/>
    <lineage>
        <taxon>Eukaryota</taxon>
        <taxon>Fungi</taxon>
        <taxon>Dikarya</taxon>
        <taxon>Ascomycota</taxon>
        <taxon>Saccharomycotina</taxon>
        <taxon>Saccharomycetes</taxon>
        <taxon>Saccharomycetales</taxon>
        <taxon>Saccharomycetaceae</taxon>
        <taxon>Nakaseomyces</taxon>
    </lineage>
</organism>
<evidence type="ECO:0000250" key="1"/>
<evidence type="ECO:0000255" key="2"/>
<evidence type="ECO:0000255" key="3">
    <source>
        <dbReference type="PROSITE-ProRule" id="PRU00541"/>
    </source>
</evidence>
<evidence type="ECO:0000255" key="4">
    <source>
        <dbReference type="PROSITE-ProRule" id="PRU00542"/>
    </source>
</evidence>
<evidence type="ECO:0000256" key="5">
    <source>
        <dbReference type="SAM" id="MobiDB-lite"/>
    </source>
</evidence>
<evidence type="ECO:0000305" key="6"/>
<sequence length="725" mass="81432">MSLKMKGKKYTDLDFVPTISDSEEDVPDLDSDEEKPKPETKGKKKNKSVDEESADMNSGFRFNTDDGEINTNFDGWEFLGDEKDEEKKDVDLDKIIRKKGGLIGMAHVDEAEKSESEESESDDEDLAMDGFGMGAQEQPEGEEEDEDASNSEQESNDEEEDDDEETYDVGDAGDAEEKVEEDTAEEMQAFYAPESESENAKKEVHKTFNDLALSRPVMKGLSNLGYVKPSPIQSATIPIALLGKDIIAGAVTGSGKTAAFMIPIIERLLYKPAKVASTRVIVLTPTRELAIQVADVGKKIGQFVSNLTFGLAVGGLNLRQQEQMLKTRPDIVIATPGRFIDHIRNSASFNVDSVEVLVIDEADRMLEDGFQDELNEIMSLLPSKRQTLLFSATMNSRIKQLISLSLKRPVRIMIDPPKQAATKLTQEFVRIRKRDHLKPSLLFNLIRKLDPNGQKRIVVFVARKDMAHKLRIILGLLGMAVAELHGSLTQEQRLDSVNKFKSLQVPVLICTDLASRGLDIPKIEVVINYDMPKSYEIYLHRVGRTARAGREGRSITFVGEASAERSIVKDAIRGVNDSEIPGSKAVGRNVDWNQVEETNKIVENMDQTVQDILVEEKEEKEILRAEMELKKGENLLKHKDEIQSRPKRTWFQSEKEKKNSKIMGALSKTKKEVNSKKRKRNEAMEDGHKRSYKKTQSDRTADQERTMKKQAKANGKKKGKSKGKR</sequence>
<protein>
    <recommendedName>
        <fullName>ATP-dependent RNA helicase DRS1</fullName>
        <ecNumber>3.6.4.13</ecNumber>
    </recommendedName>
</protein>
<name>DRS1_CANGA</name>
<proteinExistence type="inferred from homology"/>
<reference key="1">
    <citation type="journal article" date="2004" name="Nature">
        <title>Genome evolution in yeasts.</title>
        <authorList>
            <person name="Dujon B."/>
            <person name="Sherman D."/>
            <person name="Fischer G."/>
            <person name="Durrens P."/>
            <person name="Casaregola S."/>
            <person name="Lafontaine I."/>
            <person name="de Montigny J."/>
            <person name="Marck C."/>
            <person name="Neuveglise C."/>
            <person name="Talla E."/>
            <person name="Goffard N."/>
            <person name="Frangeul L."/>
            <person name="Aigle M."/>
            <person name="Anthouard V."/>
            <person name="Babour A."/>
            <person name="Barbe V."/>
            <person name="Barnay S."/>
            <person name="Blanchin S."/>
            <person name="Beckerich J.-M."/>
            <person name="Beyne E."/>
            <person name="Bleykasten C."/>
            <person name="Boisrame A."/>
            <person name="Boyer J."/>
            <person name="Cattolico L."/>
            <person name="Confanioleri F."/>
            <person name="de Daruvar A."/>
            <person name="Despons L."/>
            <person name="Fabre E."/>
            <person name="Fairhead C."/>
            <person name="Ferry-Dumazet H."/>
            <person name="Groppi A."/>
            <person name="Hantraye F."/>
            <person name="Hennequin C."/>
            <person name="Jauniaux N."/>
            <person name="Joyet P."/>
            <person name="Kachouri R."/>
            <person name="Kerrest A."/>
            <person name="Koszul R."/>
            <person name="Lemaire M."/>
            <person name="Lesur I."/>
            <person name="Ma L."/>
            <person name="Muller H."/>
            <person name="Nicaud J.-M."/>
            <person name="Nikolski M."/>
            <person name="Oztas S."/>
            <person name="Ozier-Kalogeropoulos O."/>
            <person name="Pellenz S."/>
            <person name="Potier S."/>
            <person name="Richard G.-F."/>
            <person name="Straub M.-L."/>
            <person name="Suleau A."/>
            <person name="Swennen D."/>
            <person name="Tekaia F."/>
            <person name="Wesolowski-Louvel M."/>
            <person name="Westhof E."/>
            <person name="Wirth B."/>
            <person name="Zeniou-Meyer M."/>
            <person name="Zivanovic Y."/>
            <person name="Bolotin-Fukuhara M."/>
            <person name="Thierry A."/>
            <person name="Bouchier C."/>
            <person name="Caudron B."/>
            <person name="Scarpelli C."/>
            <person name="Gaillardin C."/>
            <person name="Weissenbach J."/>
            <person name="Wincker P."/>
            <person name="Souciet J.-L."/>
        </authorList>
    </citation>
    <scope>NUCLEOTIDE SEQUENCE [LARGE SCALE GENOMIC DNA]</scope>
    <source>
        <strain>ATCC 2001 / BCRC 20586 / JCM 3761 / NBRC 0622 / NRRL Y-65 / CBS 138</strain>
    </source>
</reference>
<keyword id="KW-0067">ATP-binding</keyword>
<keyword id="KW-0175">Coiled coil</keyword>
<keyword id="KW-0347">Helicase</keyword>
<keyword id="KW-0378">Hydrolase</keyword>
<keyword id="KW-0547">Nucleotide-binding</keyword>
<keyword id="KW-0539">Nucleus</keyword>
<keyword id="KW-1185">Reference proteome</keyword>
<keyword id="KW-0690">Ribosome biogenesis</keyword>
<keyword id="KW-0694">RNA-binding</keyword>
<dbReference type="EC" id="3.6.4.13"/>
<dbReference type="EMBL" id="CR380950">
    <property type="protein sequence ID" value="CAG58463.1"/>
    <property type="molecule type" value="Genomic_DNA"/>
</dbReference>
<dbReference type="RefSeq" id="XP_445552.1">
    <property type="nucleotide sequence ID" value="XM_445552.1"/>
</dbReference>
<dbReference type="SMR" id="Q6FW42"/>
<dbReference type="FunCoup" id="Q6FW42">
    <property type="interactions" value="993"/>
</dbReference>
<dbReference type="STRING" id="284593.Q6FW42"/>
<dbReference type="EnsemblFungi" id="CAGL0D03124g-T">
    <property type="protein sequence ID" value="CAGL0D03124g-T-p1"/>
    <property type="gene ID" value="CAGL0D03124g"/>
</dbReference>
<dbReference type="KEGG" id="cgr:2887241"/>
<dbReference type="CGD" id="CAL0128263">
    <property type="gene designation" value="CAGL0D03124g"/>
</dbReference>
<dbReference type="VEuPathDB" id="FungiDB:CAGL0D03124g"/>
<dbReference type="eggNOG" id="KOG0338">
    <property type="taxonomic scope" value="Eukaryota"/>
</dbReference>
<dbReference type="HOGENOM" id="CLU_003041_3_2_1"/>
<dbReference type="InParanoid" id="Q6FW42"/>
<dbReference type="OMA" id="MIDPPKQ"/>
<dbReference type="Proteomes" id="UP000002428">
    <property type="component" value="Chromosome D"/>
</dbReference>
<dbReference type="GO" id="GO:0005829">
    <property type="term" value="C:cytosol"/>
    <property type="evidence" value="ECO:0007669"/>
    <property type="project" value="TreeGrafter"/>
</dbReference>
<dbReference type="GO" id="GO:0005730">
    <property type="term" value="C:nucleolus"/>
    <property type="evidence" value="ECO:0007669"/>
    <property type="project" value="UniProtKB-SubCell"/>
</dbReference>
<dbReference type="GO" id="GO:0030687">
    <property type="term" value="C:preribosome, large subunit precursor"/>
    <property type="evidence" value="ECO:0007669"/>
    <property type="project" value="EnsemblFungi"/>
</dbReference>
<dbReference type="GO" id="GO:0005524">
    <property type="term" value="F:ATP binding"/>
    <property type="evidence" value="ECO:0007669"/>
    <property type="project" value="UniProtKB-KW"/>
</dbReference>
<dbReference type="GO" id="GO:0016887">
    <property type="term" value="F:ATP hydrolysis activity"/>
    <property type="evidence" value="ECO:0007669"/>
    <property type="project" value="RHEA"/>
</dbReference>
<dbReference type="GO" id="GO:0003723">
    <property type="term" value="F:RNA binding"/>
    <property type="evidence" value="ECO:0007669"/>
    <property type="project" value="UniProtKB-KW"/>
</dbReference>
<dbReference type="GO" id="GO:0003724">
    <property type="term" value="F:RNA helicase activity"/>
    <property type="evidence" value="ECO:0007669"/>
    <property type="project" value="UniProtKB-EC"/>
</dbReference>
<dbReference type="GO" id="GO:0000027">
    <property type="term" value="P:ribosomal large subunit assembly"/>
    <property type="evidence" value="ECO:0007669"/>
    <property type="project" value="EnsemblFungi"/>
</dbReference>
<dbReference type="GO" id="GO:0006364">
    <property type="term" value="P:rRNA processing"/>
    <property type="evidence" value="ECO:0007669"/>
    <property type="project" value="EnsemblFungi"/>
</dbReference>
<dbReference type="CDD" id="cd17947">
    <property type="entry name" value="DEADc_DDX27"/>
    <property type="match status" value="1"/>
</dbReference>
<dbReference type="CDD" id="cd18787">
    <property type="entry name" value="SF2_C_DEAD"/>
    <property type="match status" value="1"/>
</dbReference>
<dbReference type="FunFam" id="3.40.50.300:FF:000842">
    <property type="entry name" value="ATP-dependent RNA helicase DRS1"/>
    <property type="match status" value="1"/>
</dbReference>
<dbReference type="Gene3D" id="3.40.50.300">
    <property type="entry name" value="P-loop containing nucleotide triphosphate hydrolases"/>
    <property type="match status" value="2"/>
</dbReference>
<dbReference type="InterPro" id="IPR011545">
    <property type="entry name" value="DEAD/DEAH_box_helicase_dom"/>
</dbReference>
<dbReference type="InterPro" id="IPR050079">
    <property type="entry name" value="DEAD_box_RNA_helicase"/>
</dbReference>
<dbReference type="InterPro" id="IPR014001">
    <property type="entry name" value="Helicase_ATP-bd"/>
</dbReference>
<dbReference type="InterPro" id="IPR001650">
    <property type="entry name" value="Helicase_C-like"/>
</dbReference>
<dbReference type="InterPro" id="IPR027417">
    <property type="entry name" value="P-loop_NTPase"/>
</dbReference>
<dbReference type="InterPro" id="IPR000629">
    <property type="entry name" value="RNA-helicase_DEAD-box_CS"/>
</dbReference>
<dbReference type="InterPro" id="IPR014014">
    <property type="entry name" value="RNA_helicase_DEAD_Q_motif"/>
</dbReference>
<dbReference type="PANTHER" id="PTHR47959:SF1">
    <property type="entry name" value="ATP-DEPENDENT RNA HELICASE DBPA"/>
    <property type="match status" value="1"/>
</dbReference>
<dbReference type="PANTHER" id="PTHR47959">
    <property type="entry name" value="ATP-DEPENDENT RNA HELICASE RHLE-RELATED"/>
    <property type="match status" value="1"/>
</dbReference>
<dbReference type="Pfam" id="PF00270">
    <property type="entry name" value="DEAD"/>
    <property type="match status" value="1"/>
</dbReference>
<dbReference type="Pfam" id="PF00271">
    <property type="entry name" value="Helicase_C"/>
    <property type="match status" value="1"/>
</dbReference>
<dbReference type="SMART" id="SM00487">
    <property type="entry name" value="DEXDc"/>
    <property type="match status" value="1"/>
</dbReference>
<dbReference type="SMART" id="SM00490">
    <property type="entry name" value="HELICc"/>
    <property type="match status" value="1"/>
</dbReference>
<dbReference type="SUPFAM" id="SSF52540">
    <property type="entry name" value="P-loop containing nucleoside triphosphate hydrolases"/>
    <property type="match status" value="1"/>
</dbReference>
<dbReference type="PROSITE" id="PS00039">
    <property type="entry name" value="DEAD_ATP_HELICASE"/>
    <property type="match status" value="1"/>
</dbReference>
<dbReference type="PROSITE" id="PS51192">
    <property type="entry name" value="HELICASE_ATP_BIND_1"/>
    <property type="match status" value="1"/>
</dbReference>
<dbReference type="PROSITE" id="PS51194">
    <property type="entry name" value="HELICASE_CTER"/>
    <property type="match status" value="1"/>
</dbReference>
<dbReference type="PROSITE" id="PS51195">
    <property type="entry name" value="Q_MOTIF"/>
    <property type="match status" value="1"/>
</dbReference>
<accession>Q6FW42</accession>
<comment type="function">
    <text evidence="1">ATP-binding RNA helicase involved in ribosome assembly.</text>
</comment>
<comment type="catalytic activity">
    <reaction>
        <text>ATP + H2O = ADP + phosphate + H(+)</text>
        <dbReference type="Rhea" id="RHEA:13065"/>
        <dbReference type="ChEBI" id="CHEBI:15377"/>
        <dbReference type="ChEBI" id="CHEBI:15378"/>
        <dbReference type="ChEBI" id="CHEBI:30616"/>
        <dbReference type="ChEBI" id="CHEBI:43474"/>
        <dbReference type="ChEBI" id="CHEBI:456216"/>
        <dbReference type="EC" id="3.6.4.13"/>
    </reaction>
</comment>
<comment type="subunit">
    <text evidence="1">Associates with pre-ribosomal particles.</text>
</comment>
<comment type="subcellular location">
    <subcellularLocation>
        <location evidence="1">Nucleus</location>
        <location evidence="1">Nucleolus</location>
    </subcellularLocation>
</comment>
<comment type="domain">
    <text>The Q motif is unique to and characteristic of the DEAD box family of RNA helicases and controls ATP binding and hydrolysis.</text>
</comment>
<comment type="similarity">
    <text evidence="6">Belongs to the DEAD box helicase family. DDX27/DRS1 subfamily.</text>
</comment>
<gene>
    <name type="primary">DRS1</name>
    <name type="ordered locus">CAGL0D03124g</name>
</gene>